<reference key="1">
    <citation type="journal article" date="1988" name="Nucleic Acids Res.">
        <title>The sequence of hemC, hemD and two additional E. coli genes.</title>
        <authorList>
            <person name="Alefounder P.R."/>
            <person name="Abell C."/>
            <person name="Battersby A.R."/>
        </authorList>
    </citation>
    <scope>NUCLEOTIDE SEQUENCE [GENOMIC DNA]</scope>
    <source>
        <strain>K12 / CS520</strain>
    </source>
</reference>
<reference key="2">
    <citation type="journal article" date="1987" name="Nucleic Acids Res.">
        <title>Nucleotide sequence of hemD, the second gene in the hem operon of Escherichia coli K-12.</title>
        <authorList>
            <person name="Jordan P.M."/>
            <person name="Mgbeje B.I.A."/>
            <person name="Alwan A.F."/>
            <person name="Thomas S.D."/>
        </authorList>
    </citation>
    <scope>NUCLEOTIDE SEQUENCE [GENOMIC DNA]</scope>
    <source>
        <strain>K12</strain>
    </source>
</reference>
<reference key="3">
    <citation type="journal article" date="1988" name="Biochem. J.">
        <title>Nucleotide sequence for the hemD gene of Escherichia coli encoding uroporphyrinogen III synthase and initial evidence for a hem operon.</title>
        <authorList>
            <person name="Jordan P.M."/>
            <person name="Mgbeje B.I.A."/>
            <person name="Thomas S.D."/>
            <person name="Alwan A.F."/>
        </authorList>
    </citation>
    <scope>NUCLEOTIDE SEQUENCE [GENOMIC DNA]</scope>
    <source>
        <strain>K12</strain>
    </source>
</reference>
<reference key="4">
    <citation type="journal article" date="1987" name="J. Bacteriol.">
        <title>Molecular cloning and sequencing of the hemD gene of Escherichia coli K-12 and preliminary data on the Uro operon.</title>
        <authorList>
            <person name="Sasarman A."/>
            <person name="Nepveu A."/>
            <person name="Echelard Y."/>
            <person name="Dymetryszyn J."/>
            <person name="Drolet M."/>
            <person name="Goyer C."/>
        </authorList>
    </citation>
    <scope>NUCLEOTIDE SEQUENCE [GENOMIC DNA]</scope>
</reference>
<reference key="5">
    <citation type="journal article" date="1992" name="Science">
        <title>Analysis of the Escherichia coli genome: DNA sequence of the region from 84.5 to 86.5 minutes.</title>
        <authorList>
            <person name="Daniels D.L."/>
            <person name="Plunkett G. III"/>
            <person name="Burland V.D."/>
            <person name="Blattner F.R."/>
        </authorList>
    </citation>
    <scope>NUCLEOTIDE SEQUENCE [LARGE SCALE GENOMIC DNA]</scope>
    <source>
        <strain>K12 / MG1655 / ATCC 47076</strain>
    </source>
</reference>
<reference key="6">
    <citation type="journal article" date="1997" name="Science">
        <title>The complete genome sequence of Escherichia coli K-12.</title>
        <authorList>
            <person name="Blattner F.R."/>
            <person name="Plunkett G. III"/>
            <person name="Bloch C.A."/>
            <person name="Perna N.T."/>
            <person name="Burland V."/>
            <person name="Riley M."/>
            <person name="Collado-Vides J."/>
            <person name="Glasner J.D."/>
            <person name="Rode C.K."/>
            <person name="Mayhew G.F."/>
            <person name="Gregor J."/>
            <person name="Davis N.W."/>
            <person name="Kirkpatrick H.A."/>
            <person name="Goeden M.A."/>
            <person name="Rose D.J."/>
            <person name="Mau B."/>
            <person name="Shao Y."/>
        </authorList>
    </citation>
    <scope>NUCLEOTIDE SEQUENCE [LARGE SCALE GENOMIC DNA]</scope>
    <source>
        <strain>K12 / MG1655 / ATCC 47076</strain>
    </source>
</reference>
<reference key="7">
    <citation type="journal article" date="2006" name="Mol. Syst. Biol.">
        <title>Highly accurate genome sequences of Escherichia coli K-12 strains MG1655 and W3110.</title>
        <authorList>
            <person name="Hayashi K."/>
            <person name="Morooka N."/>
            <person name="Yamamoto Y."/>
            <person name="Fujita K."/>
            <person name="Isono K."/>
            <person name="Choi S."/>
            <person name="Ohtsubo E."/>
            <person name="Baba T."/>
            <person name="Wanner B.L."/>
            <person name="Mori H."/>
            <person name="Horiuchi T."/>
        </authorList>
    </citation>
    <scope>NUCLEOTIDE SEQUENCE [LARGE SCALE GENOMIC DNA]</scope>
    <source>
        <strain>K12 / W3110 / ATCC 27325 / DSM 5911</strain>
    </source>
</reference>
<sequence>MSILVTRPSPAGEELVSRLRTLGQVAWHFPLIEFSPGQQLPQLADQLAALGESDLLFALSQHAVAFAQSQLHQQDRKWPRLPDYFAIGRTTALALHTVSGQKILYPQDREISEVLLQLPELQNIAGKRALILRGNGGRELIGDTLTARGAEVTFCECYQRCAIHYDGAEEAMRWQAREVTMVVVTSGEMLQQLWSLIPQWYREHWLLHCRLLVVSERLAKLARELGWQDIKVADNADNDALLRALQ</sequence>
<gene>
    <name type="primary">hemD</name>
    <name type="ordered locus">b3804</name>
    <name type="ordered locus">JW3776</name>
</gene>
<accession>P09126</accession>
<accession>Q2M8A9</accession>
<accession>Q47250</accession>
<evidence type="ECO:0000250" key="1"/>
<evidence type="ECO:0000305" key="2"/>
<protein>
    <recommendedName>
        <fullName>Uroporphyrinogen-III synthase</fullName>
        <shortName>UROS</shortName>
        <ecNumber>4.2.1.75</ecNumber>
    </recommendedName>
    <alternativeName>
        <fullName>Hydroxymethylbilane hydrolyase [cyclizing]</fullName>
    </alternativeName>
    <alternativeName>
        <fullName>Uroporphyrinogen-III cosynthase</fullName>
    </alternativeName>
</protein>
<proteinExistence type="inferred from homology"/>
<organism>
    <name type="scientific">Escherichia coli (strain K12)</name>
    <dbReference type="NCBI Taxonomy" id="83333"/>
    <lineage>
        <taxon>Bacteria</taxon>
        <taxon>Pseudomonadati</taxon>
        <taxon>Pseudomonadota</taxon>
        <taxon>Gammaproteobacteria</taxon>
        <taxon>Enterobacterales</taxon>
        <taxon>Enterobacteriaceae</taxon>
        <taxon>Escherichia</taxon>
    </lineage>
</organism>
<comment type="function">
    <text evidence="1">Catalyzes cyclization of the linear tetrapyrrole, hydroxymethylbilane, to the macrocyclic uroporphyrinogen III.</text>
</comment>
<comment type="catalytic activity">
    <reaction>
        <text>hydroxymethylbilane = uroporphyrinogen III + H2O</text>
        <dbReference type="Rhea" id="RHEA:18965"/>
        <dbReference type="ChEBI" id="CHEBI:15377"/>
        <dbReference type="ChEBI" id="CHEBI:57308"/>
        <dbReference type="ChEBI" id="CHEBI:57845"/>
        <dbReference type="EC" id="4.2.1.75"/>
    </reaction>
</comment>
<comment type="pathway">
    <text>Porphyrin-containing compound metabolism; protoporphyrin-IX biosynthesis; coproporphyrinogen-III from 5-aminolevulinate: step 3/4.</text>
</comment>
<comment type="subunit">
    <text>Monomer.</text>
</comment>
<comment type="similarity">
    <text evidence="2">Belongs to the uroporphyrinogen-III synthase family.</text>
</comment>
<feature type="chain" id="PRO_0000135243" description="Uroporphyrinogen-III synthase">
    <location>
        <begin position="1"/>
        <end position="246"/>
    </location>
</feature>
<feature type="sequence conflict" description="In Ref. 4; AAA23956." evidence="2" ref="4">
    <original>T</original>
    <variation>A</variation>
    <location>
        <position position="146"/>
    </location>
</feature>
<feature type="sequence conflict" description="In Ref. 2 and 3." evidence="2" ref="2 3">
    <original>A</original>
    <variation>R</variation>
    <location>
        <position position="236"/>
    </location>
</feature>
<name>HEM4_ECOLI</name>
<dbReference type="EC" id="4.2.1.75"/>
<dbReference type="EMBL" id="X12614">
    <property type="protein sequence ID" value="CAA31133.1"/>
    <property type="molecule type" value="Genomic_DNA"/>
</dbReference>
<dbReference type="EMBL" id="Y00883">
    <property type="protein sequence ID" value="CAA68776.1"/>
    <property type="molecule type" value="Genomic_DNA"/>
</dbReference>
<dbReference type="EMBL" id="M17360">
    <property type="protein sequence ID" value="AAA23956.1"/>
    <property type="molecule type" value="Genomic_DNA"/>
</dbReference>
<dbReference type="EMBL" id="M87049">
    <property type="protein sequence ID" value="AAA67600.1"/>
    <property type="molecule type" value="Genomic_DNA"/>
</dbReference>
<dbReference type="EMBL" id="U00096">
    <property type="protein sequence ID" value="AAC76807.1"/>
    <property type="molecule type" value="Genomic_DNA"/>
</dbReference>
<dbReference type="EMBL" id="AP009048">
    <property type="protein sequence ID" value="BAE77497.1"/>
    <property type="molecule type" value="Genomic_DNA"/>
</dbReference>
<dbReference type="PIR" id="E65184">
    <property type="entry name" value="E65184"/>
</dbReference>
<dbReference type="RefSeq" id="NP_418248.1">
    <property type="nucleotide sequence ID" value="NC_000913.3"/>
</dbReference>
<dbReference type="RefSeq" id="WP_000026046.1">
    <property type="nucleotide sequence ID" value="NZ_SSZK01000025.1"/>
</dbReference>
<dbReference type="SMR" id="P09126"/>
<dbReference type="BioGRID" id="4262609">
    <property type="interactions" value="7"/>
</dbReference>
<dbReference type="FunCoup" id="P09126">
    <property type="interactions" value="185"/>
</dbReference>
<dbReference type="IntAct" id="P09126">
    <property type="interactions" value="3"/>
</dbReference>
<dbReference type="STRING" id="511145.b3804"/>
<dbReference type="jPOST" id="P09126"/>
<dbReference type="PaxDb" id="511145-b3804"/>
<dbReference type="DNASU" id="948587"/>
<dbReference type="EnsemblBacteria" id="AAC76807">
    <property type="protein sequence ID" value="AAC76807"/>
    <property type="gene ID" value="b3804"/>
</dbReference>
<dbReference type="GeneID" id="948587"/>
<dbReference type="KEGG" id="ecj:JW3776"/>
<dbReference type="KEGG" id="eco:b3804"/>
<dbReference type="KEGG" id="ecoc:C3026_20595"/>
<dbReference type="PATRIC" id="fig|1411691.4.peg.2904"/>
<dbReference type="EchoBASE" id="EB0425"/>
<dbReference type="eggNOG" id="COG1587">
    <property type="taxonomic scope" value="Bacteria"/>
</dbReference>
<dbReference type="HOGENOM" id="CLU_011276_9_4_6"/>
<dbReference type="InParanoid" id="P09126"/>
<dbReference type="OMA" id="VRYWEVY"/>
<dbReference type="OrthoDB" id="9787650at2"/>
<dbReference type="PhylomeDB" id="P09126"/>
<dbReference type="BioCyc" id="EcoCyc:UROGENIIISYN-MONOMER"/>
<dbReference type="BioCyc" id="MetaCyc:UROGENIIISYN-MONOMER"/>
<dbReference type="SABIO-RK" id="P09126"/>
<dbReference type="UniPathway" id="UPA00251">
    <property type="reaction ID" value="UER00320"/>
</dbReference>
<dbReference type="PRO" id="PR:P09126"/>
<dbReference type="Proteomes" id="UP000000625">
    <property type="component" value="Chromosome"/>
</dbReference>
<dbReference type="GO" id="GO:0004852">
    <property type="term" value="F:uroporphyrinogen-III synthase activity"/>
    <property type="evidence" value="ECO:0000314"/>
    <property type="project" value="EcoCyc"/>
</dbReference>
<dbReference type="GO" id="GO:0006782">
    <property type="term" value="P:protoporphyrinogen IX biosynthetic process"/>
    <property type="evidence" value="ECO:0000314"/>
    <property type="project" value="EcoCyc"/>
</dbReference>
<dbReference type="GO" id="GO:0006780">
    <property type="term" value="P:uroporphyrinogen III biosynthetic process"/>
    <property type="evidence" value="ECO:0007669"/>
    <property type="project" value="InterPro"/>
</dbReference>
<dbReference type="CDD" id="cd06578">
    <property type="entry name" value="HemD"/>
    <property type="match status" value="1"/>
</dbReference>
<dbReference type="Gene3D" id="3.40.50.10090">
    <property type="match status" value="2"/>
</dbReference>
<dbReference type="InterPro" id="IPR036108">
    <property type="entry name" value="4pyrrol_syn_uPrphyn_synt_sf"/>
</dbReference>
<dbReference type="InterPro" id="IPR003754">
    <property type="entry name" value="4pyrrol_synth_uPrphyn_synth"/>
</dbReference>
<dbReference type="InterPro" id="IPR039793">
    <property type="entry name" value="UROS/Hem4"/>
</dbReference>
<dbReference type="NCBIfam" id="NF004582">
    <property type="entry name" value="PRK05928.1-1"/>
    <property type="match status" value="1"/>
</dbReference>
<dbReference type="PANTHER" id="PTHR38042">
    <property type="entry name" value="UROPORPHYRINOGEN-III SYNTHASE, CHLOROPLASTIC"/>
    <property type="match status" value="1"/>
</dbReference>
<dbReference type="PANTHER" id="PTHR38042:SF1">
    <property type="entry name" value="UROPORPHYRINOGEN-III SYNTHASE, CHLOROPLASTIC"/>
    <property type="match status" value="1"/>
</dbReference>
<dbReference type="Pfam" id="PF02602">
    <property type="entry name" value="HEM4"/>
    <property type="match status" value="1"/>
</dbReference>
<dbReference type="SUPFAM" id="SSF69618">
    <property type="entry name" value="HemD-like"/>
    <property type="match status" value="1"/>
</dbReference>
<keyword id="KW-0456">Lyase</keyword>
<keyword id="KW-0627">Porphyrin biosynthesis</keyword>
<keyword id="KW-1185">Reference proteome</keyword>